<protein>
    <recommendedName>
        <fullName>Small integral membrane protein 8</fullName>
    </recommendedName>
</protein>
<sequence length="97" mass="11059">MSSAPEPPTFKKEPPKEKEFQSPGLRGVRTTTLFRAVNPELFIKPNKPVMAFGLVTLSLCVAYIGYLHAIQENKKDLYEAIDSEGHSYMRRKTSKWD</sequence>
<reference key="1">
    <citation type="submission" date="2000-10" db="EMBL/GenBank/DDBJ databases">
        <title>A novel gene from human dendritic cells.</title>
        <authorList>
            <person name="Xu X."/>
            <person name="Yang Y."/>
            <person name="Gao G."/>
            <person name="Xiao H."/>
            <person name="Chen Z."/>
            <person name="Han Z."/>
        </authorList>
    </citation>
    <scope>NUCLEOTIDE SEQUENCE [LARGE SCALE MRNA]</scope>
    <source>
        <tissue>Dendritic cell</tissue>
    </source>
</reference>
<reference key="2">
    <citation type="journal article" date="2004" name="Nat. Genet.">
        <title>Complete sequencing and characterization of 21,243 full-length human cDNAs.</title>
        <authorList>
            <person name="Ota T."/>
            <person name="Suzuki Y."/>
            <person name="Nishikawa T."/>
            <person name="Otsuki T."/>
            <person name="Sugiyama T."/>
            <person name="Irie R."/>
            <person name="Wakamatsu A."/>
            <person name="Hayashi K."/>
            <person name="Sato H."/>
            <person name="Nagai K."/>
            <person name="Kimura K."/>
            <person name="Makita H."/>
            <person name="Sekine M."/>
            <person name="Obayashi M."/>
            <person name="Nishi T."/>
            <person name="Shibahara T."/>
            <person name="Tanaka T."/>
            <person name="Ishii S."/>
            <person name="Yamamoto J."/>
            <person name="Saito K."/>
            <person name="Kawai Y."/>
            <person name="Isono Y."/>
            <person name="Nakamura Y."/>
            <person name="Nagahari K."/>
            <person name="Murakami K."/>
            <person name="Yasuda T."/>
            <person name="Iwayanagi T."/>
            <person name="Wagatsuma M."/>
            <person name="Shiratori A."/>
            <person name="Sudo H."/>
            <person name="Hosoiri T."/>
            <person name="Kaku Y."/>
            <person name="Kodaira H."/>
            <person name="Kondo H."/>
            <person name="Sugawara M."/>
            <person name="Takahashi M."/>
            <person name="Kanda K."/>
            <person name="Yokoi T."/>
            <person name="Furuya T."/>
            <person name="Kikkawa E."/>
            <person name="Omura Y."/>
            <person name="Abe K."/>
            <person name="Kamihara K."/>
            <person name="Katsuta N."/>
            <person name="Sato K."/>
            <person name="Tanikawa M."/>
            <person name="Yamazaki M."/>
            <person name="Ninomiya K."/>
            <person name="Ishibashi T."/>
            <person name="Yamashita H."/>
            <person name="Murakawa K."/>
            <person name="Fujimori K."/>
            <person name="Tanai H."/>
            <person name="Kimata M."/>
            <person name="Watanabe M."/>
            <person name="Hiraoka S."/>
            <person name="Chiba Y."/>
            <person name="Ishida S."/>
            <person name="Ono Y."/>
            <person name="Takiguchi S."/>
            <person name="Watanabe S."/>
            <person name="Yosida M."/>
            <person name="Hotuta T."/>
            <person name="Kusano J."/>
            <person name="Kanehori K."/>
            <person name="Takahashi-Fujii A."/>
            <person name="Hara H."/>
            <person name="Tanase T.-O."/>
            <person name="Nomura Y."/>
            <person name="Togiya S."/>
            <person name="Komai F."/>
            <person name="Hara R."/>
            <person name="Takeuchi K."/>
            <person name="Arita M."/>
            <person name="Imose N."/>
            <person name="Musashino K."/>
            <person name="Yuuki H."/>
            <person name="Oshima A."/>
            <person name="Sasaki N."/>
            <person name="Aotsuka S."/>
            <person name="Yoshikawa Y."/>
            <person name="Matsunawa H."/>
            <person name="Ichihara T."/>
            <person name="Shiohata N."/>
            <person name="Sano S."/>
            <person name="Moriya S."/>
            <person name="Momiyama H."/>
            <person name="Satoh N."/>
            <person name="Takami S."/>
            <person name="Terashima Y."/>
            <person name="Suzuki O."/>
            <person name="Nakagawa S."/>
            <person name="Senoh A."/>
            <person name="Mizoguchi H."/>
            <person name="Goto Y."/>
            <person name="Shimizu F."/>
            <person name="Wakebe H."/>
            <person name="Hishigaki H."/>
            <person name="Watanabe T."/>
            <person name="Sugiyama A."/>
            <person name="Takemoto M."/>
            <person name="Kawakami B."/>
            <person name="Yamazaki M."/>
            <person name="Watanabe K."/>
            <person name="Kumagai A."/>
            <person name="Itakura S."/>
            <person name="Fukuzumi Y."/>
            <person name="Fujimori Y."/>
            <person name="Komiyama M."/>
            <person name="Tashiro H."/>
            <person name="Tanigami A."/>
            <person name="Fujiwara T."/>
            <person name="Ono T."/>
            <person name="Yamada K."/>
            <person name="Fujii Y."/>
            <person name="Ozaki K."/>
            <person name="Hirao M."/>
            <person name="Ohmori Y."/>
            <person name="Kawabata A."/>
            <person name="Hikiji T."/>
            <person name="Kobatake N."/>
            <person name="Inagaki H."/>
            <person name="Ikema Y."/>
            <person name="Okamoto S."/>
            <person name="Okitani R."/>
            <person name="Kawakami T."/>
            <person name="Noguchi S."/>
            <person name="Itoh T."/>
            <person name="Shigeta K."/>
            <person name="Senba T."/>
            <person name="Matsumura K."/>
            <person name="Nakajima Y."/>
            <person name="Mizuno T."/>
            <person name="Morinaga M."/>
            <person name="Sasaki M."/>
            <person name="Togashi T."/>
            <person name="Oyama M."/>
            <person name="Hata H."/>
            <person name="Watanabe M."/>
            <person name="Komatsu T."/>
            <person name="Mizushima-Sugano J."/>
            <person name="Satoh T."/>
            <person name="Shirai Y."/>
            <person name="Takahashi Y."/>
            <person name="Nakagawa K."/>
            <person name="Okumura K."/>
            <person name="Nagase T."/>
            <person name="Nomura N."/>
            <person name="Kikuchi H."/>
            <person name="Masuho Y."/>
            <person name="Yamashita R."/>
            <person name="Nakai K."/>
            <person name="Yada T."/>
            <person name="Nakamura Y."/>
            <person name="Ohara O."/>
            <person name="Isogai T."/>
            <person name="Sugano S."/>
        </authorList>
    </citation>
    <scope>NUCLEOTIDE SEQUENCE [LARGE SCALE MRNA]</scope>
    <source>
        <tissue>Hippocampus</tissue>
    </source>
</reference>
<reference key="3">
    <citation type="journal article" date="2003" name="Nature">
        <title>The DNA sequence and analysis of human chromosome 6.</title>
        <authorList>
            <person name="Mungall A.J."/>
            <person name="Palmer S.A."/>
            <person name="Sims S.K."/>
            <person name="Edwards C.A."/>
            <person name="Ashurst J.L."/>
            <person name="Wilming L."/>
            <person name="Jones M.C."/>
            <person name="Horton R."/>
            <person name="Hunt S.E."/>
            <person name="Scott C.E."/>
            <person name="Gilbert J.G.R."/>
            <person name="Clamp M.E."/>
            <person name="Bethel G."/>
            <person name="Milne S."/>
            <person name="Ainscough R."/>
            <person name="Almeida J.P."/>
            <person name="Ambrose K.D."/>
            <person name="Andrews T.D."/>
            <person name="Ashwell R.I.S."/>
            <person name="Babbage A.K."/>
            <person name="Bagguley C.L."/>
            <person name="Bailey J."/>
            <person name="Banerjee R."/>
            <person name="Barker D.J."/>
            <person name="Barlow K.F."/>
            <person name="Bates K."/>
            <person name="Beare D.M."/>
            <person name="Beasley H."/>
            <person name="Beasley O."/>
            <person name="Bird C.P."/>
            <person name="Blakey S.E."/>
            <person name="Bray-Allen S."/>
            <person name="Brook J."/>
            <person name="Brown A.J."/>
            <person name="Brown J.Y."/>
            <person name="Burford D.C."/>
            <person name="Burrill W."/>
            <person name="Burton J."/>
            <person name="Carder C."/>
            <person name="Carter N.P."/>
            <person name="Chapman J.C."/>
            <person name="Clark S.Y."/>
            <person name="Clark G."/>
            <person name="Clee C.M."/>
            <person name="Clegg S."/>
            <person name="Cobley V."/>
            <person name="Collier R.E."/>
            <person name="Collins J.E."/>
            <person name="Colman L.K."/>
            <person name="Corby N.R."/>
            <person name="Coville G.J."/>
            <person name="Culley K.M."/>
            <person name="Dhami P."/>
            <person name="Davies J."/>
            <person name="Dunn M."/>
            <person name="Earthrowl M.E."/>
            <person name="Ellington A.E."/>
            <person name="Evans K.A."/>
            <person name="Faulkner L."/>
            <person name="Francis M.D."/>
            <person name="Frankish A."/>
            <person name="Frankland J."/>
            <person name="French L."/>
            <person name="Garner P."/>
            <person name="Garnett J."/>
            <person name="Ghori M.J."/>
            <person name="Gilby L.M."/>
            <person name="Gillson C.J."/>
            <person name="Glithero R.J."/>
            <person name="Grafham D.V."/>
            <person name="Grant M."/>
            <person name="Gribble S."/>
            <person name="Griffiths C."/>
            <person name="Griffiths M.N.D."/>
            <person name="Hall R."/>
            <person name="Halls K.S."/>
            <person name="Hammond S."/>
            <person name="Harley J.L."/>
            <person name="Hart E.A."/>
            <person name="Heath P.D."/>
            <person name="Heathcott R."/>
            <person name="Holmes S.J."/>
            <person name="Howden P.J."/>
            <person name="Howe K.L."/>
            <person name="Howell G.R."/>
            <person name="Huckle E."/>
            <person name="Humphray S.J."/>
            <person name="Humphries M.D."/>
            <person name="Hunt A.R."/>
            <person name="Johnson C.M."/>
            <person name="Joy A.A."/>
            <person name="Kay M."/>
            <person name="Keenan S.J."/>
            <person name="Kimberley A.M."/>
            <person name="King A."/>
            <person name="Laird G.K."/>
            <person name="Langford C."/>
            <person name="Lawlor S."/>
            <person name="Leongamornlert D.A."/>
            <person name="Leversha M."/>
            <person name="Lloyd C.R."/>
            <person name="Lloyd D.M."/>
            <person name="Loveland J.E."/>
            <person name="Lovell J."/>
            <person name="Martin S."/>
            <person name="Mashreghi-Mohammadi M."/>
            <person name="Maslen G.L."/>
            <person name="Matthews L."/>
            <person name="McCann O.T."/>
            <person name="McLaren S.J."/>
            <person name="McLay K."/>
            <person name="McMurray A."/>
            <person name="Moore M.J.F."/>
            <person name="Mullikin J.C."/>
            <person name="Niblett D."/>
            <person name="Nickerson T."/>
            <person name="Novik K.L."/>
            <person name="Oliver K."/>
            <person name="Overton-Larty E.K."/>
            <person name="Parker A."/>
            <person name="Patel R."/>
            <person name="Pearce A.V."/>
            <person name="Peck A.I."/>
            <person name="Phillimore B.J.C.T."/>
            <person name="Phillips S."/>
            <person name="Plumb R.W."/>
            <person name="Porter K.M."/>
            <person name="Ramsey Y."/>
            <person name="Ranby S.A."/>
            <person name="Rice C.M."/>
            <person name="Ross M.T."/>
            <person name="Searle S.M."/>
            <person name="Sehra H.K."/>
            <person name="Sheridan E."/>
            <person name="Skuce C.D."/>
            <person name="Smith S."/>
            <person name="Smith M."/>
            <person name="Spraggon L."/>
            <person name="Squares S.L."/>
            <person name="Steward C.A."/>
            <person name="Sycamore N."/>
            <person name="Tamlyn-Hall G."/>
            <person name="Tester J."/>
            <person name="Theaker A.J."/>
            <person name="Thomas D.W."/>
            <person name="Thorpe A."/>
            <person name="Tracey A."/>
            <person name="Tromans A."/>
            <person name="Tubby B."/>
            <person name="Wall M."/>
            <person name="Wallis J.M."/>
            <person name="West A.P."/>
            <person name="White S.S."/>
            <person name="Whitehead S.L."/>
            <person name="Whittaker H."/>
            <person name="Wild A."/>
            <person name="Willey D.J."/>
            <person name="Wilmer T.E."/>
            <person name="Wood J.M."/>
            <person name="Wray P.W."/>
            <person name="Wyatt J.C."/>
            <person name="Young L."/>
            <person name="Younger R.M."/>
            <person name="Bentley D.R."/>
            <person name="Coulson A."/>
            <person name="Durbin R.M."/>
            <person name="Hubbard T."/>
            <person name="Sulston J.E."/>
            <person name="Dunham I."/>
            <person name="Rogers J."/>
            <person name="Beck S."/>
        </authorList>
    </citation>
    <scope>NUCLEOTIDE SEQUENCE [LARGE SCALE GENOMIC DNA]</scope>
</reference>
<reference key="4">
    <citation type="submission" date="2005-09" db="EMBL/GenBank/DDBJ databases">
        <authorList>
            <person name="Mural R.J."/>
            <person name="Istrail S."/>
            <person name="Sutton G.G."/>
            <person name="Florea L."/>
            <person name="Halpern A.L."/>
            <person name="Mobarry C.M."/>
            <person name="Lippert R."/>
            <person name="Walenz B."/>
            <person name="Shatkay H."/>
            <person name="Dew I."/>
            <person name="Miller J.R."/>
            <person name="Flanigan M.J."/>
            <person name="Edwards N.J."/>
            <person name="Bolanos R."/>
            <person name="Fasulo D."/>
            <person name="Halldorsson B.V."/>
            <person name="Hannenhalli S."/>
            <person name="Turner R."/>
            <person name="Yooseph S."/>
            <person name="Lu F."/>
            <person name="Nusskern D.R."/>
            <person name="Shue B.C."/>
            <person name="Zheng X.H."/>
            <person name="Zhong F."/>
            <person name="Delcher A.L."/>
            <person name="Huson D.H."/>
            <person name="Kravitz S.A."/>
            <person name="Mouchard L."/>
            <person name="Reinert K."/>
            <person name="Remington K.A."/>
            <person name="Clark A.G."/>
            <person name="Waterman M.S."/>
            <person name="Eichler E.E."/>
            <person name="Adams M.D."/>
            <person name="Hunkapiller M.W."/>
            <person name="Myers E.W."/>
            <person name="Venter J.C."/>
        </authorList>
    </citation>
    <scope>NUCLEOTIDE SEQUENCE [LARGE SCALE GENOMIC DNA]</scope>
</reference>
<reference key="5">
    <citation type="journal article" date="2004" name="Genome Res.">
        <title>The status, quality, and expansion of the NIH full-length cDNA project: the Mammalian Gene Collection (MGC).</title>
        <authorList>
            <consortium name="The MGC Project Team"/>
        </authorList>
    </citation>
    <scope>NUCLEOTIDE SEQUENCE [LARGE SCALE MRNA]</scope>
</reference>
<reference key="6">
    <citation type="journal article" date="2011" name="BMC Syst. Biol.">
        <title>Initial characterization of the human central proteome.</title>
        <authorList>
            <person name="Burkard T.R."/>
            <person name="Planyavsky M."/>
            <person name="Kaupe I."/>
            <person name="Breitwieser F.P."/>
            <person name="Buerckstuemmer T."/>
            <person name="Bennett K.L."/>
            <person name="Superti-Furga G."/>
            <person name="Colinge J."/>
        </authorList>
    </citation>
    <scope>IDENTIFICATION BY MASS SPECTROMETRY [LARGE SCALE ANALYSIS]</scope>
</reference>
<dbReference type="EMBL" id="AF311339">
    <property type="protein sequence ID" value="AAK38513.1"/>
    <property type="status" value="ALT_FRAME"/>
    <property type="molecule type" value="mRNA"/>
</dbReference>
<dbReference type="EMBL" id="AK311963">
    <property type="protein sequence ID" value="BAG34903.1"/>
    <property type="molecule type" value="mRNA"/>
</dbReference>
<dbReference type="EMBL" id="AL096817">
    <property type="status" value="NOT_ANNOTATED_CDS"/>
    <property type="molecule type" value="Genomic_DNA"/>
</dbReference>
<dbReference type="EMBL" id="CH471051">
    <property type="protein sequence ID" value="EAW48602.1"/>
    <property type="molecule type" value="Genomic_DNA"/>
</dbReference>
<dbReference type="EMBL" id="CH471051">
    <property type="protein sequence ID" value="EAW48603.1"/>
    <property type="molecule type" value="Genomic_DNA"/>
</dbReference>
<dbReference type="EMBL" id="BC070260">
    <property type="protein sequence ID" value="AAH70260.1"/>
    <property type="molecule type" value="mRNA"/>
</dbReference>
<dbReference type="CCDS" id="CCDS34496.1"/>
<dbReference type="RefSeq" id="NP_001035958.1">
    <property type="nucleotide sequence ID" value="NM_001042493.3"/>
</dbReference>
<dbReference type="RefSeq" id="NP_065158.3">
    <property type="nucleotide sequence ID" value="NM_020425.5"/>
</dbReference>
<dbReference type="BioGRID" id="121407">
    <property type="interactions" value="22"/>
</dbReference>
<dbReference type="FunCoup" id="Q96KF7">
    <property type="interactions" value="743"/>
</dbReference>
<dbReference type="IntAct" id="Q96KF7">
    <property type="interactions" value="16"/>
</dbReference>
<dbReference type="STRING" id="9606.ENSP00000376603"/>
<dbReference type="iPTMnet" id="Q96KF7"/>
<dbReference type="PhosphoSitePlus" id="Q96KF7"/>
<dbReference type="BioMuta" id="SMIM8"/>
<dbReference type="DMDM" id="71152382"/>
<dbReference type="jPOST" id="Q96KF7"/>
<dbReference type="MassIVE" id="Q96KF7"/>
<dbReference type="PaxDb" id="9606-ENSP00000376603"/>
<dbReference type="PeptideAtlas" id="Q96KF7"/>
<dbReference type="ProteomicsDB" id="77066"/>
<dbReference type="Pumba" id="Q96KF7"/>
<dbReference type="TopDownProteomics" id="Q96KF7"/>
<dbReference type="Antibodypedia" id="2342">
    <property type="antibodies" value="12 antibodies from 7 providers"/>
</dbReference>
<dbReference type="DNASU" id="57150"/>
<dbReference type="Ensembl" id="ENST00000229570.9">
    <property type="protein sequence ID" value="ENSP00000229570.5"/>
    <property type="gene ID" value="ENSG00000111850.11"/>
</dbReference>
<dbReference type="Ensembl" id="ENST00000392863.6">
    <property type="protein sequence ID" value="ENSP00000376603.1"/>
    <property type="gene ID" value="ENSG00000111850.11"/>
</dbReference>
<dbReference type="Ensembl" id="ENST00000608353.5">
    <property type="protein sequence ID" value="ENSP00000477133.1"/>
    <property type="gene ID" value="ENSG00000111850.11"/>
</dbReference>
<dbReference type="Ensembl" id="ENST00000608868.2">
    <property type="protein sequence ID" value="ENSP00000476945.1"/>
    <property type="gene ID" value="ENSG00000111850.11"/>
</dbReference>
<dbReference type="GeneID" id="57150"/>
<dbReference type="KEGG" id="hsa:57150"/>
<dbReference type="MANE-Select" id="ENST00000392863.6">
    <property type="protein sequence ID" value="ENSP00000376603.1"/>
    <property type="RefSeq nucleotide sequence ID" value="NM_001042493.3"/>
    <property type="RefSeq protein sequence ID" value="NP_001035958.1"/>
</dbReference>
<dbReference type="UCSC" id="uc003plp.2">
    <property type="organism name" value="human"/>
</dbReference>
<dbReference type="AGR" id="HGNC:21401"/>
<dbReference type="CTD" id="57150"/>
<dbReference type="DisGeNET" id="57150"/>
<dbReference type="GeneCards" id="SMIM8"/>
<dbReference type="HGNC" id="HGNC:21401">
    <property type="gene designation" value="SMIM8"/>
</dbReference>
<dbReference type="HPA" id="ENSG00000111850">
    <property type="expression patterns" value="Low tissue specificity"/>
</dbReference>
<dbReference type="neXtProt" id="NX_Q96KF7"/>
<dbReference type="OpenTargets" id="ENSG00000111850"/>
<dbReference type="PharmGKB" id="PA134961667"/>
<dbReference type="VEuPathDB" id="HostDB:ENSG00000111850"/>
<dbReference type="eggNOG" id="ENOG502S4X3">
    <property type="taxonomic scope" value="Eukaryota"/>
</dbReference>
<dbReference type="GeneTree" id="ENSGT00390000011674"/>
<dbReference type="HOGENOM" id="CLU_170028_0_0_1"/>
<dbReference type="InParanoid" id="Q96KF7"/>
<dbReference type="OMA" id="YMHATRE"/>
<dbReference type="OrthoDB" id="1880105at2759"/>
<dbReference type="PAN-GO" id="Q96KF7">
    <property type="GO annotations" value="0 GO annotations based on evolutionary models"/>
</dbReference>
<dbReference type="PhylomeDB" id="Q96KF7"/>
<dbReference type="TreeFam" id="TF323863"/>
<dbReference type="PathwayCommons" id="Q96KF7"/>
<dbReference type="SignaLink" id="Q96KF7"/>
<dbReference type="BioGRID-ORCS" id="57150">
    <property type="hits" value="8 hits in 1103 CRISPR screens"/>
</dbReference>
<dbReference type="GenomeRNAi" id="57150"/>
<dbReference type="Pharos" id="Q96KF7">
    <property type="development level" value="Tdark"/>
</dbReference>
<dbReference type="PRO" id="PR:Q96KF7"/>
<dbReference type="Proteomes" id="UP000005640">
    <property type="component" value="Chromosome 6"/>
</dbReference>
<dbReference type="RNAct" id="Q96KF7">
    <property type="molecule type" value="protein"/>
</dbReference>
<dbReference type="Bgee" id="ENSG00000111850">
    <property type="expression patterns" value="Expressed in buccal mucosa cell and 182 other cell types or tissues"/>
</dbReference>
<dbReference type="ExpressionAtlas" id="Q96KF7">
    <property type="expression patterns" value="baseline and differential"/>
</dbReference>
<dbReference type="GO" id="GO:0016020">
    <property type="term" value="C:membrane"/>
    <property type="evidence" value="ECO:0007669"/>
    <property type="project" value="UniProtKB-SubCell"/>
</dbReference>
<dbReference type="GO" id="GO:0005739">
    <property type="term" value="C:mitochondrion"/>
    <property type="evidence" value="ECO:0006056"/>
    <property type="project" value="FlyBase"/>
</dbReference>
<dbReference type="InterPro" id="IPR026686">
    <property type="entry name" value="UPF0708"/>
</dbReference>
<dbReference type="PANTHER" id="PTHR14274">
    <property type="entry name" value="SMALL INTEGRAL MEMBRANE PROTEIN 8"/>
    <property type="match status" value="1"/>
</dbReference>
<dbReference type="PANTHER" id="PTHR14274:SF1">
    <property type="entry name" value="SMALL INTEGRAL MEMBRANE PROTEIN 8"/>
    <property type="match status" value="1"/>
</dbReference>
<dbReference type="Pfam" id="PF14937">
    <property type="entry name" value="DUF4500"/>
    <property type="match status" value="1"/>
</dbReference>
<proteinExistence type="evidence at protein level"/>
<name>SMIM8_HUMAN</name>
<gene>
    <name type="primary">SMIM8</name>
    <name type="synonym">C6orf162</name>
    <name type="ORF">DC18</name>
</gene>
<organism>
    <name type="scientific">Homo sapiens</name>
    <name type="common">Human</name>
    <dbReference type="NCBI Taxonomy" id="9606"/>
    <lineage>
        <taxon>Eukaryota</taxon>
        <taxon>Metazoa</taxon>
        <taxon>Chordata</taxon>
        <taxon>Craniata</taxon>
        <taxon>Vertebrata</taxon>
        <taxon>Euteleostomi</taxon>
        <taxon>Mammalia</taxon>
        <taxon>Eutheria</taxon>
        <taxon>Euarchontoglires</taxon>
        <taxon>Primates</taxon>
        <taxon>Haplorrhini</taxon>
        <taxon>Catarrhini</taxon>
        <taxon>Hominidae</taxon>
        <taxon>Homo</taxon>
    </lineage>
</organism>
<evidence type="ECO:0000255" key="1"/>
<evidence type="ECO:0000256" key="2">
    <source>
        <dbReference type="SAM" id="MobiDB-lite"/>
    </source>
</evidence>
<evidence type="ECO:0000305" key="3"/>
<feature type="chain" id="PRO_0000089550" description="Small integral membrane protein 8">
    <location>
        <begin position="1"/>
        <end position="97"/>
    </location>
</feature>
<feature type="transmembrane region" description="Helical" evidence="1">
    <location>
        <begin position="48"/>
        <end position="70"/>
    </location>
</feature>
<feature type="region of interest" description="Disordered" evidence="2">
    <location>
        <begin position="1"/>
        <end position="24"/>
    </location>
</feature>
<feature type="compositionally biased region" description="Basic and acidic residues" evidence="2">
    <location>
        <begin position="9"/>
        <end position="20"/>
    </location>
</feature>
<accession>Q96KF7</accession>
<accession>B2R4V6</accession>
<accession>E1P505</accession>
<accession>Q5TEZ3</accession>
<accession>Q6NSD2</accession>
<accession>Q8IZ10</accession>
<comment type="subcellular location">
    <subcellularLocation>
        <location evidence="3">Membrane</location>
        <topology evidence="3">Single-pass membrane protein</topology>
    </subcellularLocation>
</comment>
<comment type="similarity">
    <text evidence="3">Belongs to the SMIM8 family.</text>
</comment>
<comment type="sequence caution" evidence="3">
    <conflict type="frameshift">
        <sequence resource="EMBL-CDS" id="AAK38513"/>
    </conflict>
</comment>
<keyword id="KW-0472">Membrane</keyword>
<keyword id="KW-1267">Proteomics identification</keyword>
<keyword id="KW-1185">Reference proteome</keyword>
<keyword id="KW-0812">Transmembrane</keyword>
<keyword id="KW-1133">Transmembrane helix</keyword>